<dbReference type="EMBL" id="CP000804">
    <property type="protein sequence ID" value="ABU59958.1"/>
    <property type="molecule type" value="Genomic_DNA"/>
</dbReference>
<dbReference type="RefSeq" id="WP_012122381.1">
    <property type="nucleotide sequence ID" value="NC_009767.1"/>
</dbReference>
<dbReference type="SMR" id="A7NQW2"/>
<dbReference type="STRING" id="383372.Rcas_3925"/>
<dbReference type="KEGG" id="rca:Rcas_3925"/>
<dbReference type="eggNOG" id="COG0052">
    <property type="taxonomic scope" value="Bacteria"/>
</dbReference>
<dbReference type="HOGENOM" id="CLU_040318_1_2_0"/>
<dbReference type="OrthoDB" id="9808036at2"/>
<dbReference type="Proteomes" id="UP000000263">
    <property type="component" value="Chromosome"/>
</dbReference>
<dbReference type="GO" id="GO:0022627">
    <property type="term" value="C:cytosolic small ribosomal subunit"/>
    <property type="evidence" value="ECO:0007669"/>
    <property type="project" value="TreeGrafter"/>
</dbReference>
<dbReference type="GO" id="GO:0003735">
    <property type="term" value="F:structural constituent of ribosome"/>
    <property type="evidence" value="ECO:0007669"/>
    <property type="project" value="InterPro"/>
</dbReference>
<dbReference type="GO" id="GO:0006412">
    <property type="term" value="P:translation"/>
    <property type="evidence" value="ECO:0007669"/>
    <property type="project" value="UniProtKB-UniRule"/>
</dbReference>
<dbReference type="CDD" id="cd01425">
    <property type="entry name" value="RPS2"/>
    <property type="match status" value="1"/>
</dbReference>
<dbReference type="FunFam" id="1.10.287.610:FF:000001">
    <property type="entry name" value="30S ribosomal protein S2"/>
    <property type="match status" value="1"/>
</dbReference>
<dbReference type="Gene3D" id="3.40.50.10490">
    <property type="entry name" value="Glucose-6-phosphate isomerase like protein, domain 1"/>
    <property type="match status" value="1"/>
</dbReference>
<dbReference type="Gene3D" id="1.10.287.610">
    <property type="entry name" value="Helix hairpin bin"/>
    <property type="match status" value="1"/>
</dbReference>
<dbReference type="HAMAP" id="MF_00291_B">
    <property type="entry name" value="Ribosomal_uS2_B"/>
    <property type="match status" value="1"/>
</dbReference>
<dbReference type="InterPro" id="IPR001865">
    <property type="entry name" value="Ribosomal_uS2"/>
</dbReference>
<dbReference type="InterPro" id="IPR005706">
    <property type="entry name" value="Ribosomal_uS2_bac/mit/plastid"/>
</dbReference>
<dbReference type="InterPro" id="IPR018130">
    <property type="entry name" value="Ribosomal_uS2_CS"/>
</dbReference>
<dbReference type="InterPro" id="IPR023591">
    <property type="entry name" value="Ribosomal_uS2_flav_dom_sf"/>
</dbReference>
<dbReference type="NCBIfam" id="TIGR01011">
    <property type="entry name" value="rpsB_bact"/>
    <property type="match status" value="1"/>
</dbReference>
<dbReference type="PANTHER" id="PTHR12534">
    <property type="entry name" value="30S RIBOSOMAL PROTEIN S2 PROKARYOTIC AND ORGANELLAR"/>
    <property type="match status" value="1"/>
</dbReference>
<dbReference type="PANTHER" id="PTHR12534:SF0">
    <property type="entry name" value="SMALL RIBOSOMAL SUBUNIT PROTEIN US2M"/>
    <property type="match status" value="1"/>
</dbReference>
<dbReference type="Pfam" id="PF00318">
    <property type="entry name" value="Ribosomal_S2"/>
    <property type="match status" value="1"/>
</dbReference>
<dbReference type="PRINTS" id="PR00395">
    <property type="entry name" value="RIBOSOMALS2"/>
</dbReference>
<dbReference type="SUPFAM" id="SSF52313">
    <property type="entry name" value="Ribosomal protein S2"/>
    <property type="match status" value="1"/>
</dbReference>
<dbReference type="PROSITE" id="PS00962">
    <property type="entry name" value="RIBOSOMAL_S2_1"/>
    <property type="match status" value="1"/>
</dbReference>
<dbReference type="PROSITE" id="PS00963">
    <property type="entry name" value="RIBOSOMAL_S2_2"/>
    <property type="match status" value="1"/>
</dbReference>
<organism>
    <name type="scientific">Roseiflexus castenholzii (strain DSM 13941 / HLO8)</name>
    <dbReference type="NCBI Taxonomy" id="383372"/>
    <lineage>
        <taxon>Bacteria</taxon>
        <taxon>Bacillati</taxon>
        <taxon>Chloroflexota</taxon>
        <taxon>Chloroflexia</taxon>
        <taxon>Chloroflexales</taxon>
        <taxon>Roseiflexineae</taxon>
        <taxon>Roseiflexaceae</taxon>
        <taxon>Roseiflexus</taxon>
    </lineage>
</organism>
<feature type="chain" id="PRO_0000352031" description="Small ribosomal subunit protein uS2">
    <location>
        <begin position="1"/>
        <end position="263"/>
    </location>
</feature>
<proteinExistence type="inferred from homology"/>
<reference key="1">
    <citation type="submission" date="2007-08" db="EMBL/GenBank/DDBJ databases">
        <title>Complete sequence of Roseiflexus castenholzii DSM 13941.</title>
        <authorList>
            <consortium name="US DOE Joint Genome Institute"/>
            <person name="Copeland A."/>
            <person name="Lucas S."/>
            <person name="Lapidus A."/>
            <person name="Barry K."/>
            <person name="Glavina del Rio T."/>
            <person name="Dalin E."/>
            <person name="Tice H."/>
            <person name="Pitluck S."/>
            <person name="Thompson L.S."/>
            <person name="Brettin T."/>
            <person name="Bruce D."/>
            <person name="Detter J.C."/>
            <person name="Han C."/>
            <person name="Tapia R."/>
            <person name="Schmutz J."/>
            <person name="Larimer F."/>
            <person name="Land M."/>
            <person name="Hauser L."/>
            <person name="Kyrpides N."/>
            <person name="Mikhailova N."/>
            <person name="Bryant D.A."/>
            <person name="Hanada S."/>
            <person name="Tsukatani Y."/>
            <person name="Richardson P."/>
        </authorList>
    </citation>
    <scope>NUCLEOTIDE SEQUENCE [LARGE SCALE GENOMIC DNA]</scope>
    <source>
        <strain>DSM 13941 / HLO8</strain>
    </source>
</reference>
<name>RS2_ROSCS</name>
<keyword id="KW-1185">Reference proteome</keyword>
<keyword id="KW-0687">Ribonucleoprotein</keyword>
<keyword id="KW-0689">Ribosomal protein</keyword>
<accession>A7NQW2</accession>
<sequence length="263" mass="29557">MTQGAQRLVSMRALLESGAHFGHQTKRWNPKMRPYIFTARNGIHIIDLQKTITGLTEAYQFIVETVAAGNKVLFVGTKKQAQETIAEEATRADQLYVIQRWLGGTLTNFVTIRKRLRYLINLEEQRARGEFNKLTKAEALKRDAEIEKLNKIFGGIKTMDRLPGALFIVDPHKEDLAVKEANKVGIPIVAMVDTNCDPDLIDYVIPCNDDAIRSIRLIAAKIADAAIEGRNRRESLQADVAYSQSHDHAMAERMIAEEAEAVE</sequence>
<comment type="similarity">
    <text evidence="1">Belongs to the universal ribosomal protein uS2 family.</text>
</comment>
<protein>
    <recommendedName>
        <fullName evidence="1">Small ribosomal subunit protein uS2</fullName>
    </recommendedName>
    <alternativeName>
        <fullName evidence="2">30S ribosomal protein S2</fullName>
    </alternativeName>
</protein>
<evidence type="ECO:0000255" key="1">
    <source>
        <dbReference type="HAMAP-Rule" id="MF_00291"/>
    </source>
</evidence>
<evidence type="ECO:0000305" key="2"/>
<gene>
    <name evidence="1" type="primary">rpsB</name>
    <name type="ordered locus">Rcas_3925</name>
</gene>